<accession>A4RM13</accession>
<accession>G4MV59</accession>
<feature type="chain" id="PRO_0000333526" description="GDP-mannose transporter">
    <location>
        <begin position="1"/>
        <end position="394"/>
    </location>
</feature>
<feature type="topological domain" description="Cytoplasmic" evidence="1">
    <location>
        <begin position="1"/>
        <end position="55"/>
    </location>
</feature>
<feature type="transmembrane region" description="Helical" evidence="2">
    <location>
        <begin position="56"/>
        <end position="76"/>
    </location>
</feature>
<feature type="topological domain" description="Lumenal" evidence="1">
    <location>
        <begin position="77"/>
        <end position="80"/>
    </location>
</feature>
<feature type="transmembrane region" description="Helical" evidence="2">
    <location>
        <begin position="81"/>
        <end position="101"/>
    </location>
</feature>
<feature type="topological domain" description="Cytoplasmic" evidence="1">
    <location>
        <begin position="102"/>
        <end position="121"/>
    </location>
</feature>
<feature type="transmembrane region" description="Helical" evidence="2">
    <location>
        <begin position="122"/>
        <end position="144"/>
    </location>
</feature>
<feature type="topological domain" description="Lumenal" evidence="1">
    <location>
        <begin position="145"/>
        <end position="149"/>
    </location>
</feature>
<feature type="transmembrane region" description="Helical" evidence="2">
    <location>
        <begin position="150"/>
        <end position="167"/>
    </location>
</feature>
<feature type="topological domain" description="Cytoplasmic" evidence="1">
    <location>
        <begin position="168"/>
        <end position="173"/>
    </location>
</feature>
<feature type="transmembrane region" description="Helical" evidence="2">
    <location>
        <begin position="174"/>
        <end position="198"/>
    </location>
</feature>
<feature type="topological domain" description="Lumenal" evidence="1">
    <location>
        <begin position="199"/>
        <end position="213"/>
    </location>
</feature>
<feature type="transmembrane region" description="Helical" evidence="2">
    <location>
        <begin position="214"/>
        <end position="234"/>
    </location>
</feature>
<feature type="topological domain" description="Cytoplasmic" evidence="1">
    <location>
        <begin position="235"/>
        <end position="246"/>
    </location>
</feature>
<feature type="transmembrane region" description="Helical" evidence="2">
    <location>
        <begin position="247"/>
        <end position="267"/>
    </location>
</feature>
<feature type="topological domain" description="Lumenal" evidence="1">
    <location>
        <begin position="268"/>
        <end position="287"/>
    </location>
</feature>
<feature type="transmembrane region" description="Helical" evidence="2">
    <location>
        <begin position="288"/>
        <end position="308"/>
    </location>
</feature>
<feature type="topological domain" description="Cytoplasmic" evidence="1">
    <location>
        <begin position="309"/>
        <end position="316"/>
    </location>
</feature>
<feature type="transmembrane region" description="Helical" evidence="2">
    <location>
        <begin position="317"/>
        <end position="339"/>
    </location>
</feature>
<feature type="topological domain" description="Lumenal" evidence="1">
    <location>
        <begin position="340"/>
        <end position="342"/>
    </location>
</feature>
<feature type="transmembrane region" description="Helical" evidence="2">
    <location>
        <begin position="343"/>
        <end position="362"/>
    </location>
</feature>
<feature type="topological domain" description="Cytoplasmic" evidence="1">
    <location>
        <begin position="363"/>
        <end position="394"/>
    </location>
</feature>
<feature type="region of interest" description="Disordered" evidence="3">
    <location>
        <begin position="371"/>
        <end position="394"/>
    </location>
</feature>
<feature type="compositionally biased region" description="Polar residues" evidence="3">
    <location>
        <begin position="374"/>
        <end position="394"/>
    </location>
</feature>
<reference key="1">
    <citation type="journal article" date="2005" name="Nature">
        <title>The genome sequence of the rice blast fungus Magnaporthe grisea.</title>
        <authorList>
            <person name="Dean R.A."/>
            <person name="Talbot N.J."/>
            <person name="Ebbole D.J."/>
            <person name="Farman M.L."/>
            <person name="Mitchell T.K."/>
            <person name="Orbach M.J."/>
            <person name="Thon M.R."/>
            <person name="Kulkarni R."/>
            <person name="Xu J.-R."/>
            <person name="Pan H."/>
            <person name="Read N.D."/>
            <person name="Lee Y.-H."/>
            <person name="Carbone I."/>
            <person name="Brown D."/>
            <person name="Oh Y.Y."/>
            <person name="Donofrio N."/>
            <person name="Jeong J.S."/>
            <person name="Soanes D.M."/>
            <person name="Djonovic S."/>
            <person name="Kolomiets E."/>
            <person name="Rehmeyer C."/>
            <person name="Li W."/>
            <person name="Harding M."/>
            <person name="Kim S."/>
            <person name="Lebrun M.-H."/>
            <person name="Bohnert H."/>
            <person name="Coughlan S."/>
            <person name="Butler J."/>
            <person name="Calvo S.E."/>
            <person name="Ma L.-J."/>
            <person name="Nicol R."/>
            <person name="Purcell S."/>
            <person name="Nusbaum C."/>
            <person name="Galagan J.E."/>
            <person name="Birren B.W."/>
        </authorList>
    </citation>
    <scope>NUCLEOTIDE SEQUENCE [LARGE SCALE GENOMIC DNA]</scope>
    <source>
        <strain>70-15 / ATCC MYA-4617 / FGSC 8958</strain>
    </source>
</reference>
<protein>
    <recommendedName>
        <fullName>GDP-mannose transporter</fullName>
        <shortName>GMT</shortName>
    </recommendedName>
</protein>
<organism>
    <name type="scientific">Pyricularia oryzae (strain 70-15 / ATCC MYA-4617 / FGSC 8958)</name>
    <name type="common">Rice blast fungus</name>
    <name type="synonym">Magnaporthe oryzae</name>
    <dbReference type="NCBI Taxonomy" id="242507"/>
    <lineage>
        <taxon>Eukaryota</taxon>
        <taxon>Fungi</taxon>
        <taxon>Dikarya</taxon>
        <taxon>Ascomycota</taxon>
        <taxon>Pezizomycotina</taxon>
        <taxon>Sordariomycetes</taxon>
        <taxon>Sordariomycetidae</taxon>
        <taxon>Magnaporthales</taxon>
        <taxon>Pyriculariaceae</taxon>
        <taxon>Pyricularia</taxon>
    </lineage>
</organism>
<keyword id="KW-0968">Cytoplasmic vesicle</keyword>
<keyword id="KW-0256">Endoplasmic reticulum</keyword>
<keyword id="KW-0333">Golgi apparatus</keyword>
<keyword id="KW-0472">Membrane</keyword>
<keyword id="KW-1185">Reference proteome</keyword>
<keyword id="KW-0762">Sugar transport</keyword>
<keyword id="KW-0812">Transmembrane</keyword>
<keyword id="KW-1133">Transmembrane helix</keyword>
<keyword id="KW-0813">Transport</keyword>
<gene>
    <name type="primary">VRG4</name>
    <name type="ORF">MGG_08858</name>
</gene>
<sequence>MADKKNEDFVVRMPDNGTVEKEPFLARSPPARARTGSGGGFGDSFSLARVANNPPAAILAYCLSSISMTVVNKYVVSGSEWNLNFFYLAVQAIVCIIAILFCKQIGIITNLAPFDNVKAKKWFPVSLLLVGMIYTSTKALQFLSVPVYTIFKNLTIIAIAYGEVLWFGGSVSPLALVSFGLMVLSSVVAAWADIQSAIHGGSHPSEASTAISTLNAGYAWMGMNVFCSAAYLLGMRKVIHKMNFKDWDSMFYNNLLTIPVLIVCSLIAEDWSAANLARNFPIESRNALFIGMIYSGLGAIFISYCSAWCIRVTTSTTYSMVGALNKLPIAISGLVFFSAPVTFGSVSAIVIGFISGIVYAWAKARQSSQAKSALPTQQPVMSASSQSNKDASNS</sequence>
<comment type="function">
    <text evidence="1">Involved in the import of GDP-mannose from the cytoplasm into the Golgi lumen.</text>
</comment>
<comment type="subunit">
    <text evidence="1">Homooligomer.</text>
</comment>
<comment type="subcellular location">
    <subcellularLocation>
        <location evidence="1">Golgi apparatus membrane</location>
        <topology evidence="1">Multi-pass membrane protein</topology>
    </subcellularLocation>
    <subcellularLocation>
        <location evidence="1">Cytoplasmic vesicle membrane</location>
        <topology evidence="1">Multi-pass membrane protein</topology>
    </subcellularLocation>
    <subcellularLocation>
        <location evidence="1">Endoplasmic reticulum membrane</location>
        <topology evidence="1">Multi-pass membrane protein</topology>
    </subcellularLocation>
</comment>
<comment type="similarity">
    <text evidence="4">Belongs to the TPT transporter family. SLC35D subfamily.</text>
</comment>
<name>GMT_PYRO7</name>
<evidence type="ECO:0000250" key="1"/>
<evidence type="ECO:0000255" key="2"/>
<evidence type="ECO:0000256" key="3">
    <source>
        <dbReference type="SAM" id="MobiDB-lite"/>
    </source>
</evidence>
<evidence type="ECO:0000305" key="4"/>
<dbReference type="EMBL" id="CM001232">
    <property type="protein sequence ID" value="EHA54074.1"/>
    <property type="molecule type" value="Genomic_DNA"/>
</dbReference>
<dbReference type="RefSeq" id="XP_003713881.1">
    <property type="nucleotide sequence ID" value="XM_003713833.1"/>
</dbReference>
<dbReference type="SMR" id="A4RM13"/>
<dbReference type="FunCoup" id="A4RM13">
    <property type="interactions" value="572"/>
</dbReference>
<dbReference type="STRING" id="242507.A4RM13"/>
<dbReference type="EnsemblFungi" id="MGG_08858T0">
    <property type="protein sequence ID" value="MGG_08858T0"/>
    <property type="gene ID" value="MGG_08858"/>
</dbReference>
<dbReference type="GeneID" id="2679844"/>
<dbReference type="KEGG" id="mgr:MGG_08858"/>
<dbReference type="VEuPathDB" id="FungiDB:MGG_08858"/>
<dbReference type="eggNOG" id="KOG1444">
    <property type="taxonomic scope" value="Eukaryota"/>
</dbReference>
<dbReference type="HOGENOM" id="CLU_025360_1_2_1"/>
<dbReference type="InParanoid" id="A4RM13"/>
<dbReference type="OMA" id="VWMLINC"/>
<dbReference type="OrthoDB" id="417037at2759"/>
<dbReference type="Proteomes" id="UP000009058">
    <property type="component" value="Chromosome 2"/>
</dbReference>
<dbReference type="GO" id="GO:0030659">
    <property type="term" value="C:cytoplasmic vesicle membrane"/>
    <property type="evidence" value="ECO:0007669"/>
    <property type="project" value="UniProtKB-SubCell"/>
</dbReference>
<dbReference type="GO" id="GO:0005789">
    <property type="term" value="C:endoplasmic reticulum membrane"/>
    <property type="evidence" value="ECO:0007669"/>
    <property type="project" value="UniProtKB-SubCell"/>
</dbReference>
<dbReference type="GO" id="GO:0000139">
    <property type="term" value="C:Golgi membrane"/>
    <property type="evidence" value="ECO:0007669"/>
    <property type="project" value="UniProtKB-SubCell"/>
</dbReference>
<dbReference type="GO" id="GO:0005458">
    <property type="term" value="F:GDP-mannose transmembrane transporter activity"/>
    <property type="evidence" value="ECO:0007669"/>
    <property type="project" value="EnsemblFungi"/>
</dbReference>
<dbReference type="InterPro" id="IPR050186">
    <property type="entry name" value="TPT_transporter"/>
</dbReference>
<dbReference type="NCBIfam" id="TIGR00803">
    <property type="entry name" value="nst"/>
    <property type="match status" value="1"/>
</dbReference>
<dbReference type="PANTHER" id="PTHR11132">
    <property type="entry name" value="SOLUTE CARRIER FAMILY 35"/>
    <property type="match status" value="1"/>
</dbReference>
<proteinExistence type="inferred from homology"/>